<feature type="initiator methionine" description="Removed" evidence="1">
    <location>
        <position position="1"/>
    </location>
</feature>
<feature type="chain" id="PRO_0000424969" description="Profilin-1">
    <location>
        <begin position="2"/>
        <end position="134"/>
    </location>
</feature>
<feature type="short sequence motif" description="Involved in PIP2 interaction">
    <location>
        <begin position="84"/>
        <end position="100"/>
    </location>
</feature>
<feature type="modified residue" description="Phosphothreonine" evidence="1">
    <location>
        <position position="114"/>
    </location>
</feature>
<feature type="disulfide bond" evidence="3">
    <location>
        <begin position="13"/>
        <end position="118"/>
    </location>
</feature>
<reference key="1">
    <citation type="journal article" date="2012" name="PLoS ONE">
        <title>Characterization of profilin polymorphism in pollen with a focus on multifunctionality.</title>
        <authorList>
            <person name="Jimenez-Lopez J.C."/>
            <person name="Morales S."/>
            <person name="Castro A.J."/>
            <person name="Volkmann D."/>
            <person name="Rodriguez-Garcia M.I."/>
            <person name="Alche Jde D."/>
        </authorList>
    </citation>
    <scope>NUCLEOTIDE SEQUENCE [MRNA]</scope>
    <scope>POLYMORPHISM</scope>
    <source>
        <strain>cv. Lechin de Sevilla</strain>
        <tissue>Pollen</tissue>
    </source>
</reference>
<reference key="2">
    <citation type="journal article" date="2013" name="PLoS ONE">
        <title>Analysis of the effects of polymorphism on pollen profilin structural functionality and the generation of conformational, T- and B-cell epitopes.</title>
        <authorList>
            <person name="Jimenez-Lopez J.C."/>
            <person name="Rodriguez-Garcia M.I."/>
            <person name="Alche J.D."/>
        </authorList>
    </citation>
    <scope>3D-STRUCTURE MODELING</scope>
    <scope>DISULFIDE BOND</scope>
</reference>
<sequence length="134" mass="14427">MSWQAYVDDHLMCDIEGHEGHRLTAAAIVGHDGSVWAQSATFPQFKPEEMNGIMTDFNEPGHLAPTGLHLGGTKYMVIQGEAGAVIRGKKGSGGITIKKTGQALVFGIYEEPVTPGQCNMVVERLGDYLLEQGL</sequence>
<proteinExistence type="evidence at protein level"/>
<accession>P0DKD0</accession>
<accession>A4GCR3</accession>
<name>PROFD_OLEEU</name>
<keyword id="KW-0009">Actin-binding</keyword>
<keyword id="KW-0020">Allergen</keyword>
<keyword id="KW-0963">Cytoplasm</keyword>
<keyword id="KW-0206">Cytoskeleton</keyword>
<keyword id="KW-1015">Disulfide bond</keyword>
<keyword id="KW-0597">Phosphoprotein</keyword>
<comment type="function">
    <text evidence="1">Binds to actin and affects the structure of the cytoskeleton. At high concentrations, profilin prevents the polymerization of actin, whereas it enhances it at low concentrations (By similarity).</text>
</comment>
<comment type="subunit">
    <text evidence="1">Occurs in many kinds of cells as a complex with monomeric actin in a 1:1 ratio.</text>
</comment>
<comment type="subcellular location">
    <subcellularLocation>
        <location evidence="1">Cytoplasm</location>
        <location evidence="1">Cytoskeleton</location>
    </subcellularLocation>
</comment>
<comment type="PTM">
    <text evidence="1">Phosphorylated by MAP kinases.</text>
</comment>
<comment type="polymorphism">
    <text>Several isoforms of the allergen exist due to polymorphism.</text>
</comment>
<comment type="allergen">
    <text>Causes an allergic reaction in human.</text>
</comment>
<comment type="miscellaneous">
    <text evidence="3">The variability of the residues taking part of IgE-binding epitopes might be responsible of the difference in cross-reactivity among olive pollen cultivars, and between distantly related pollen species, leading to a variable range of allergy reactions among atopic patients.</text>
</comment>
<comment type="similarity">
    <text evidence="2">Belongs to the profilin family.</text>
</comment>
<dbReference type="EMBL" id="DQ028766">
    <property type="protein sequence ID" value="AAY88883.1"/>
    <property type="molecule type" value="mRNA"/>
</dbReference>
<dbReference type="SMR" id="P0DKD0"/>
<dbReference type="GO" id="GO:0005938">
    <property type="term" value="C:cell cortex"/>
    <property type="evidence" value="ECO:0007669"/>
    <property type="project" value="TreeGrafter"/>
</dbReference>
<dbReference type="GO" id="GO:0005856">
    <property type="term" value="C:cytoskeleton"/>
    <property type="evidence" value="ECO:0007669"/>
    <property type="project" value="UniProtKB-SubCell"/>
</dbReference>
<dbReference type="GO" id="GO:0003785">
    <property type="term" value="F:actin monomer binding"/>
    <property type="evidence" value="ECO:0007669"/>
    <property type="project" value="TreeGrafter"/>
</dbReference>
<dbReference type="CDD" id="cd00148">
    <property type="entry name" value="PROF"/>
    <property type="match status" value="1"/>
</dbReference>
<dbReference type="FunFam" id="3.30.450.30:FF:000001">
    <property type="entry name" value="Profilin"/>
    <property type="match status" value="1"/>
</dbReference>
<dbReference type="Gene3D" id="3.30.450.30">
    <property type="entry name" value="Dynein light chain 2a, cytoplasmic"/>
    <property type="match status" value="1"/>
</dbReference>
<dbReference type="InterPro" id="IPR048278">
    <property type="entry name" value="PFN"/>
</dbReference>
<dbReference type="InterPro" id="IPR005455">
    <property type="entry name" value="PFN_euk"/>
</dbReference>
<dbReference type="InterPro" id="IPR036140">
    <property type="entry name" value="PFN_sf"/>
</dbReference>
<dbReference type="InterPro" id="IPR027310">
    <property type="entry name" value="Profilin_CS"/>
</dbReference>
<dbReference type="PANTHER" id="PTHR11604">
    <property type="entry name" value="PROFILIN"/>
    <property type="match status" value="1"/>
</dbReference>
<dbReference type="PANTHER" id="PTHR11604:SF25">
    <property type="entry name" value="PROFILIN-5"/>
    <property type="match status" value="1"/>
</dbReference>
<dbReference type="Pfam" id="PF00235">
    <property type="entry name" value="Profilin"/>
    <property type="match status" value="1"/>
</dbReference>
<dbReference type="PRINTS" id="PR00392">
    <property type="entry name" value="PROFILIN"/>
</dbReference>
<dbReference type="PRINTS" id="PR01640">
    <property type="entry name" value="PROFILINPLNT"/>
</dbReference>
<dbReference type="SMART" id="SM00392">
    <property type="entry name" value="PROF"/>
    <property type="match status" value="1"/>
</dbReference>
<dbReference type="SUPFAM" id="SSF55770">
    <property type="entry name" value="Profilin (actin-binding protein)"/>
    <property type="match status" value="1"/>
</dbReference>
<dbReference type="PROSITE" id="PS00414">
    <property type="entry name" value="PROFILIN"/>
    <property type="match status" value="1"/>
</dbReference>
<evidence type="ECO:0000250" key="1"/>
<evidence type="ECO:0000305" key="2"/>
<evidence type="ECO:0000305" key="3">
    <source>
    </source>
</evidence>
<protein>
    <recommendedName>
        <fullName>Profilin-1</fullName>
    </recommendedName>
    <alternativeName>
        <fullName>Pollen allergen Ole e 2</fullName>
    </alternativeName>
    <allergenName>Ole e 2</allergenName>
</protein>
<organism>
    <name type="scientific">Olea europaea</name>
    <name type="common">Common olive</name>
    <dbReference type="NCBI Taxonomy" id="4146"/>
    <lineage>
        <taxon>Eukaryota</taxon>
        <taxon>Viridiplantae</taxon>
        <taxon>Streptophyta</taxon>
        <taxon>Embryophyta</taxon>
        <taxon>Tracheophyta</taxon>
        <taxon>Spermatophyta</taxon>
        <taxon>Magnoliopsida</taxon>
        <taxon>eudicotyledons</taxon>
        <taxon>Gunneridae</taxon>
        <taxon>Pentapetalae</taxon>
        <taxon>asterids</taxon>
        <taxon>lamiids</taxon>
        <taxon>Lamiales</taxon>
        <taxon>Oleaceae</taxon>
        <taxon>Oleeae</taxon>
        <taxon>Olea</taxon>
    </lineage>
</organism>